<organism>
    <name type="scientific">Schizosaccharomyces pombe (strain 972 / ATCC 24843)</name>
    <name type="common">Fission yeast</name>
    <dbReference type="NCBI Taxonomy" id="284812"/>
    <lineage>
        <taxon>Eukaryota</taxon>
        <taxon>Fungi</taxon>
        <taxon>Dikarya</taxon>
        <taxon>Ascomycota</taxon>
        <taxon>Taphrinomycotina</taxon>
        <taxon>Schizosaccharomycetes</taxon>
        <taxon>Schizosaccharomycetales</taxon>
        <taxon>Schizosaccharomycetaceae</taxon>
        <taxon>Schizosaccharomyces</taxon>
    </lineage>
</organism>
<name>YIDH_SCHPO</name>
<keyword id="KW-1185">Reference proteome</keyword>
<sequence>MNNFKENDEKSTFGQYAELDKILDLKKGIPEDPCSLQYYFDQMAMCLTVFSQMNHYYRYGEYNRCKGNFKDFKWCLSTKSKAHEEAQEGLRKRRLQQWMKFRQGPNSEDIWKMRTSPKSSE</sequence>
<protein>
    <recommendedName>
        <fullName>Uncharacterized protein C227.17c</fullName>
    </recommendedName>
</protein>
<accession>Q9UTC2</accession>
<feature type="chain" id="PRO_0000116789" description="Uncharacterized protein C227.17c">
    <location>
        <begin position="1"/>
        <end position="121"/>
    </location>
</feature>
<reference key="1">
    <citation type="journal article" date="2002" name="Nature">
        <title>The genome sequence of Schizosaccharomyces pombe.</title>
        <authorList>
            <person name="Wood V."/>
            <person name="Gwilliam R."/>
            <person name="Rajandream M.A."/>
            <person name="Lyne M.H."/>
            <person name="Lyne R."/>
            <person name="Stewart A."/>
            <person name="Sgouros J.G."/>
            <person name="Peat N."/>
            <person name="Hayles J."/>
            <person name="Baker S.G."/>
            <person name="Basham D."/>
            <person name="Bowman S."/>
            <person name="Brooks K."/>
            <person name="Brown D."/>
            <person name="Brown S."/>
            <person name="Chillingworth T."/>
            <person name="Churcher C.M."/>
            <person name="Collins M."/>
            <person name="Connor R."/>
            <person name="Cronin A."/>
            <person name="Davis P."/>
            <person name="Feltwell T."/>
            <person name="Fraser A."/>
            <person name="Gentles S."/>
            <person name="Goble A."/>
            <person name="Hamlin N."/>
            <person name="Harris D.E."/>
            <person name="Hidalgo J."/>
            <person name="Hodgson G."/>
            <person name="Holroyd S."/>
            <person name="Hornsby T."/>
            <person name="Howarth S."/>
            <person name="Huckle E.J."/>
            <person name="Hunt S."/>
            <person name="Jagels K."/>
            <person name="James K.D."/>
            <person name="Jones L."/>
            <person name="Jones M."/>
            <person name="Leather S."/>
            <person name="McDonald S."/>
            <person name="McLean J."/>
            <person name="Mooney P."/>
            <person name="Moule S."/>
            <person name="Mungall K.L."/>
            <person name="Murphy L.D."/>
            <person name="Niblett D."/>
            <person name="Odell C."/>
            <person name="Oliver K."/>
            <person name="O'Neil S."/>
            <person name="Pearson D."/>
            <person name="Quail M.A."/>
            <person name="Rabbinowitsch E."/>
            <person name="Rutherford K.M."/>
            <person name="Rutter S."/>
            <person name="Saunders D."/>
            <person name="Seeger K."/>
            <person name="Sharp S."/>
            <person name="Skelton J."/>
            <person name="Simmonds M.N."/>
            <person name="Squares R."/>
            <person name="Squares S."/>
            <person name="Stevens K."/>
            <person name="Taylor K."/>
            <person name="Taylor R.G."/>
            <person name="Tivey A."/>
            <person name="Walsh S.V."/>
            <person name="Warren T."/>
            <person name="Whitehead S."/>
            <person name="Woodward J.R."/>
            <person name="Volckaert G."/>
            <person name="Aert R."/>
            <person name="Robben J."/>
            <person name="Grymonprez B."/>
            <person name="Weltjens I."/>
            <person name="Vanstreels E."/>
            <person name="Rieger M."/>
            <person name="Schaefer M."/>
            <person name="Mueller-Auer S."/>
            <person name="Gabel C."/>
            <person name="Fuchs M."/>
            <person name="Duesterhoeft A."/>
            <person name="Fritzc C."/>
            <person name="Holzer E."/>
            <person name="Moestl D."/>
            <person name="Hilbert H."/>
            <person name="Borzym K."/>
            <person name="Langer I."/>
            <person name="Beck A."/>
            <person name="Lehrach H."/>
            <person name="Reinhardt R."/>
            <person name="Pohl T.M."/>
            <person name="Eger P."/>
            <person name="Zimmermann W."/>
            <person name="Wedler H."/>
            <person name="Wambutt R."/>
            <person name="Purnelle B."/>
            <person name="Goffeau A."/>
            <person name="Cadieu E."/>
            <person name="Dreano S."/>
            <person name="Gloux S."/>
            <person name="Lelaure V."/>
            <person name="Mottier S."/>
            <person name="Galibert F."/>
            <person name="Aves S.J."/>
            <person name="Xiang Z."/>
            <person name="Hunt C."/>
            <person name="Moore K."/>
            <person name="Hurst S.M."/>
            <person name="Lucas M."/>
            <person name="Rochet M."/>
            <person name="Gaillardin C."/>
            <person name="Tallada V.A."/>
            <person name="Garzon A."/>
            <person name="Thode G."/>
            <person name="Daga R.R."/>
            <person name="Cruzado L."/>
            <person name="Jimenez J."/>
            <person name="Sanchez M."/>
            <person name="del Rey F."/>
            <person name="Benito J."/>
            <person name="Dominguez A."/>
            <person name="Revuelta J.L."/>
            <person name="Moreno S."/>
            <person name="Armstrong J."/>
            <person name="Forsburg S.L."/>
            <person name="Cerutti L."/>
            <person name="Lowe T."/>
            <person name="McCombie W.R."/>
            <person name="Paulsen I."/>
            <person name="Potashkin J."/>
            <person name="Shpakovski G.V."/>
            <person name="Ussery D."/>
            <person name="Barrell B.G."/>
            <person name="Nurse P."/>
        </authorList>
    </citation>
    <scope>NUCLEOTIDE SEQUENCE [LARGE SCALE GENOMIC DNA]</scope>
    <source>
        <strain>972 / ATCC 24843</strain>
    </source>
</reference>
<gene>
    <name type="ORF">SPAC227.17c</name>
</gene>
<dbReference type="EMBL" id="CU329670">
    <property type="protein sequence ID" value="CAB61466.1"/>
    <property type="molecule type" value="Genomic_DNA"/>
</dbReference>
<dbReference type="PIR" id="T50173">
    <property type="entry name" value="T50173"/>
</dbReference>
<dbReference type="RefSeq" id="NP_592971.1">
    <property type="nucleotide sequence ID" value="NM_001018371.2"/>
</dbReference>
<dbReference type="BioGRID" id="277990">
    <property type="interactions" value="88"/>
</dbReference>
<dbReference type="STRING" id="284812.Q9UTC2"/>
<dbReference type="PaxDb" id="4896-SPAC227.17c.1"/>
<dbReference type="EnsemblFungi" id="SPAC227.17c.1">
    <property type="protein sequence ID" value="SPAC227.17c.1:pep"/>
    <property type="gene ID" value="SPAC227.17c"/>
</dbReference>
<dbReference type="KEGG" id="spo:2541488"/>
<dbReference type="PomBase" id="SPAC227.17c"/>
<dbReference type="VEuPathDB" id="FungiDB:SPAC227.17c"/>
<dbReference type="eggNOG" id="ENOG502S9DM">
    <property type="taxonomic scope" value="Eukaryota"/>
</dbReference>
<dbReference type="HOGENOM" id="CLU_2147325_0_0_1"/>
<dbReference type="InParanoid" id="Q9UTC2"/>
<dbReference type="OMA" id="QMAMCLT"/>
<dbReference type="PhylomeDB" id="Q9UTC2"/>
<dbReference type="PRO" id="PR:Q9UTC2"/>
<dbReference type="Proteomes" id="UP000002485">
    <property type="component" value="Chromosome I"/>
</dbReference>
<dbReference type="GO" id="GO:0005829">
    <property type="term" value="C:cytosol"/>
    <property type="evidence" value="ECO:0007005"/>
    <property type="project" value="PomBase"/>
</dbReference>
<dbReference type="GO" id="GO:0005634">
    <property type="term" value="C:nucleus"/>
    <property type="evidence" value="ECO:0007005"/>
    <property type="project" value="PomBase"/>
</dbReference>
<dbReference type="InterPro" id="IPR021475">
    <property type="entry name" value="Pants/Emi1-like"/>
</dbReference>
<dbReference type="PANTHER" id="PTHR28052">
    <property type="entry name" value="UPF0545 PROTEIN C22ORF39"/>
    <property type="match status" value="1"/>
</dbReference>
<dbReference type="PANTHER" id="PTHR28052:SF1">
    <property type="entry name" value="UPF0545 PROTEIN C22ORF39"/>
    <property type="match status" value="1"/>
</dbReference>
<dbReference type="Pfam" id="PF11326">
    <property type="entry name" value="PANTS-like"/>
    <property type="match status" value="1"/>
</dbReference>
<proteinExistence type="predicted"/>